<dbReference type="EMBL" id="CR735121">
    <property type="status" value="NOT_ANNOTATED_CDS"/>
    <property type="molecule type" value="Genomic_DNA"/>
</dbReference>
<dbReference type="RefSeq" id="NP_001410718.1">
    <property type="nucleotide sequence ID" value="NM_001423789.1"/>
</dbReference>
<dbReference type="RefSeq" id="XP_693037.2">
    <property type="nucleotide sequence ID" value="XM_687945.8"/>
</dbReference>
<dbReference type="STRING" id="7955.ENSDARP00000091038"/>
<dbReference type="PaxDb" id="7955-ENSDARP00000091038"/>
<dbReference type="Ensembl" id="ENSDART00000100265">
    <property type="protein sequence ID" value="ENSDARP00000091038"/>
    <property type="gene ID" value="ENSDARG00000061062"/>
</dbReference>
<dbReference type="GeneID" id="564612"/>
<dbReference type="AGR" id="ZFIN:ZDB-GENE-081104-413"/>
<dbReference type="ZFIN" id="ZDB-GENE-081104-413">
    <property type="gene designation" value="nemp2"/>
</dbReference>
<dbReference type="eggNOG" id="KOG3817">
    <property type="taxonomic scope" value="Eukaryota"/>
</dbReference>
<dbReference type="HOGENOM" id="CLU_025225_0_0_1"/>
<dbReference type="InParanoid" id="F1QYC4"/>
<dbReference type="OMA" id="IWSTLQV"/>
<dbReference type="OrthoDB" id="509138at2759"/>
<dbReference type="PhylomeDB" id="F1QYC4"/>
<dbReference type="TreeFam" id="TF314831"/>
<dbReference type="PRO" id="PR:F1QYC4"/>
<dbReference type="Proteomes" id="UP000000437">
    <property type="component" value="Chromosome 9"/>
</dbReference>
<dbReference type="Bgee" id="ENSDARG00000061062">
    <property type="expression patterns" value="Expressed in mature ovarian follicle and 20 other cell types or tissues"/>
</dbReference>
<dbReference type="ExpressionAtlas" id="F1QYC4">
    <property type="expression patterns" value="baseline"/>
</dbReference>
<dbReference type="GO" id="GO:0005635">
    <property type="term" value="C:nuclear envelope"/>
    <property type="evidence" value="ECO:0000318"/>
    <property type="project" value="GO_Central"/>
</dbReference>
<dbReference type="GO" id="GO:0005637">
    <property type="term" value="C:nuclear inner membrane"/>
    <property type="evidence" value="ECO:0007669"/>
    <property type="project" value="UniProtKB-SubCell"/>
</dbReference>
<dbReference type="GO" id="GO:0001556">
    <property type="term" value="P:oocyte maturation"/>
    <property type="evidence" value="ECO:0000315"/>
    <property type="project" value="ZFIN"/>
</dbReference>
<dbReference type="InterPro" id="IPR019358">
    <property type="entry name" value="NEMP_fam"/>
</dbReference>
<dbReference type="PANTHER" id="PTHR13598">
    <property type="entry name" value="AT07567P-RELATED"/>
    <property type="match status" value="1"/>
</dbReference>
<dbReference type="PANTHER" id="PTHR13598:SF5">
    <property type="entry name" value="NUCLEAR ENVELOPE INTEGRAL MEMBRANE PROTEIN 2"/>
    <property type="match status" value="1"/>
</dbReference>
<dbReference type="Pfam" id="PF10225">
    <property type="entry name" value="NEMP"/>
    <property type="match status" value="1"/>
</dbReference>
<comment type="function">
    <text evidence="2 7">Contributes to nuclear envelope stiffness in germ cells (By similarity). Involved in male and female fertility (PubMed:32923640).</text>
</comment>
<comment type="subcellular location">
    <subcellularLocation>
        <location evidence="3">Nucleus inner membrane</location>
        <topology evidence="4">Multi-pass membrane protein</topology>
        <orientation evidence="1">Nucleoplasmic side</orientation>
    </subcellularLocation>
</comment>
<comment type="disruption phenotype">
    <text evidence="7">No discernible effect on morphology, viability or fecundity (PubMed:32923640). Simultaneous knockout of nemp1 and nemp2 results in viable healthy animals but both females and males have impaired fertility with females laying normal-sized clutches only for the first 3 weeks followed by a marked drop in fertility (PubMed:32923640).</text>
</comment>
<comment type="similarity">
    <text evidence="8">Belongs to the NEMP family.</text>
</comment>
<sequence length="479" mass="54933">MEKLAAFILVLTLLCAYWQSAEGIREYSYADCTDVKGDSAHRYSGSRCFCYSPGTVIKWKDIWSTFKVNVSSNVDVVVVFPMETINCHHPDDLLTVMNCFVEHYWPSTVQRETSLEIPLVDVDICFMIKSPRSNTEYTLHVSNKRLNRMCFLLFVCGLILFFGARNICRSSLFFYTTGVSLGIIATFVFLTLLLRNFVPKRGLFLVLLGAGSGLSYMGIQRVLNEWDDIVTEHWMELLAYVLISGLFSFAVCYKHGPITNKHTLNFMTCSMQAVGIVLLYYGITFPPAYFVLVAVLLCWKILPLAWSLLMGICSLFYSFLALFRRRRRPTVRLLTEEEYREQGEIHTRASLDELREYCNRPGFPAWETVLRLRSPQRFAEFLRQGSHITQEEHQNHENHYGLGGAYYENVIFNNSSSSDTQSHREEAEDNSEDEIVGNSPPVLNNLPSPTIYPPTICPYPPVTYTPQPEPLDPEDQDFF</sequence>
<feature type="signal peptide" evidence="4">
    <location>
        <begin position="1"/>
        <end position="23"/>
    </location>
</feature>
<feature type="chain" id="PRO_5003268716" description="Nuclear envelope integral membrane protein 2" evidence="4">
    <location>
        <begin position="24"/>
        <end position="479"/>
    </location>
</feature>
<feature type="transmembrane region" description="Helical" evidence="4">
    <location>
        <begin position="172"/>
        <end position="192"/>
    </location>
</feature>
<feature type="transmembrane region" description="Helical" evidence="4">
    <location>
        <begin position="203"/>
        <end position="223"/>
    </location>
</feature>
<feature type="transmembrane region" description="Helical" evidence="4">
    <location>
        <begin position="233"/>
        <end position="253"/>
    </location>
</feature>
<feature type="transmembrane region" description="Helical" evidence="4">
    <location>
        <begin position="276"/>
        <end position="296"/>
    </location>
</feature>
<feature type="transmembrane region" description="Helical" evidence="4">
    <location>
        <begin position="301"/>
        <end position="321"/>
    </location>
</feature>
<feature type="region of interest" description="Disordered" evidence="6">
    <location>
        <begin position="414"/>
        <end position="479"/>
    </location>
</feature>
<feature type="compositionally biased region" description="Low complexity" evidence="6">
    <location>
        <begin position="438"/>
        <end position="449"/>
    </location>
</feature>
<feature type="compositionally biased region" description="Pro residues" evidence="6">
    <location>
        <begin position="450"/>
        <end position="470"/>
    </location>
</feature>
<feature type="glycosylation site" description="N-linked (GlcNAc...) asparagine" evidence="5">
    <location>
        <position position="69"/>
    </location>
</feature>
<feature type="glycosylation site" description="N-linked (GlcNAc...) asparagine" evidence="5">
    <location>
        <position position="414"/>
    </location>
</feature>
<reference evidence="9" key="1">
    <citation type="journal article" date="2013" name="Nature">
        <title>The zebrafish reference genome sequence and its relationship to the human genome.</title>
        <authorList>
            <person name="Howe K."/>
            <person name="Clark M.D."/>
            <person name="Torroja C.F."/>
            <person name="Torrance J."/>
            <person name="Berthelot C."/>
            <person name="Muffato M."/>
            <person name="Collins J.E."/>
            <person name="Humphray S."/>
            <person name="McLaren K."/>
            <person name="Matthews L."/>
            <person name="McLaren S."/>
            <person name="Sealy I."/>
            <person name="Caccamo M."/>
            <person name="Churcher C."/>
            <person name="Scott C."/>
            <person name="Barrett J.C."/>
            <person name="Koch R."/>
            <person name="Rauch G.J."/>
            <person name="White S."/>
            <person name="Chow W."/>
            <person name="Kilian B."/>
            <person name="Quintais L.T."/>
            <person name="Guerra-Assuncao J.A."/>
            <person name="Zhou Y."/>
            <person name="Gu Y."/>
            <person name="Yen J."/>
            <person name="Vogel J.H."/>
            <person name="Eyre T."/>
            <person name="Redmond S."/>
            <person name="Banerjee R."/>
            <person name="Chi J."/>
            <person name="Fu B."/>
            <person name="Langley E."/>
            <person name="Maguire S.F."/>
            <person name="Laird G.K."/>
            <person name="Lloyd D."/>
            <person name="Kenyon E."/>
            <person name="Donaldson S."/>
            <person name="Sehra H."/>
            <person name="Almeida-King J."/>
            <person name="Loveland J."/>
            <person name="Trevanion S."/>
            <person name="Jones M."/>
            <person name="Quail M."/>
            <person name="Willey D."/>
            <person name="Hunt A."/>
            <person name="Burton J."/>
            <person name="Sims S."/>
            <person name="McLay K."/>
            <person name="Plumb B."/>
            <person name="Davis J."/>
            <person name="Clee C."/>
            <person name="Oliver K."/>
            <person name="Clark R."/>
            <person name="Riddle C."/>
            <person name="Elliot D."/>
            <person name="Threadgold G."/>
            <person name="Harden G."/>
            <person name="Ware D."/>
            <person name="Begum S."/>
            <person name="Mortimore B."/>
            <person name="Kerry G."/>
            <person name="Heath P."/>
            <person name="Phillimore B."/>
            <person name="Tracey A."/>
            <person name="Corby N."/>
            <person name="Dunn M."/>
            <person name="Johnson C."/>
            <person name="Wood J."/>
            <person name="Clark S."/>
            <person name="Pelan S."/>
            <person name="Griffiths G."/>
            <person name="Smith M."/>
            <person name="Glithero R."/>
            <person name="Howden P."/>
            <person name="Barker N."/>
            <person name="Lloyd C."/>
            <person name="Stevens C."/>
            <person name="Harley J."/>
            <person name="Holt K."/>
            <person name="Panagiotidis G."/>
            <person name="Lovell J."/>
            <person name="Beasley H."/>
            <person name="Henderson C."/>
            <person name="Gordon D."/>
            <person name="Auger K."/>
            <person name="Wright D."/>
            <person name="Collins J."/>
            <person name="Raisen C."/>
            <person name="Dyer L."/>
            <person name="Leung K."/>
            <person name="Robertson L."/>
            <person name="Ambridge K."/>
            <person name="Leongamornlert D."/>
            <person name="McGuire S."/>
            <person name="Gilderthorp R."/>
            <person name="Griffiths C."/>
            <person name="Manthravadi D."/>
            <person name="Nichol S."/>
            <person name="Barker G."/>
            <person name="Whitehead S."/>
            <person name="Kay M."/>
            <person name="Brown J."/>
            <person name="Murnane C."/>
            <person name="Gray E."/>
            <person name="Humphries M."/>
            <person name="Sycamore N."/>
            <person name="Barker D."/>
            <person name="Saunders D."/>
            <person name="Wallis J."/>
            <person name="Babbage A."/>
            <person name="Hammond S."/>
            <person name="Mashreghi-Mohammadi M."/>
            <person name="Barr L."/>
            <person name="Martin S."/>
            <person name="Wray P."/>
            <person name="Ellington A."/>
            <person name="Matthews N."/>
            <person name="Ellwood M."/>
            <person name="Woodmansey R."/>
            <person name="Clark G."/>
            <person name="Cooper J."/>
            <person name="Tromans A."/>
            <person name="Grafham D."/>
            <person name="Skuce C."/>
            <person name="Pandian R."/>
            <person name="Andrews R."/>
            <person name="Harrison E."/>
            <person name="Kimberley A."/>
            <person name="Garnett J."/>
            <person name="Fosker N."/>
            <person name="Hall R."/>
            <person name="Garner P."/>
            <person name="Kelly D."/>
            <person name="Bird C."/>
            <person name="Palmer S."/>
            <person name="Gehring I."/>
            <person name="Berger A."/>
            <person name="Dooley C.M."/>
            <person name="Ersan-Urun Z."/>
            <person name="Eser C."/>
            <person name="Geiger H."/>
            <person name="Geisler M."/>
            <person name="Karotki L."/>
            <person name="Kirn A."/>
            <person name="Konantz J."/>
            <person name="Konantz M."/>
            <person name="Oberlander M."/>
            <person name="Rudolph-Geiger S."/>
            <person name="Teucke M."/>
            <person name="Lanz C."/>
            <person name="Raddatz G."/>
            <person name="Osoegawa K."/>
            <person name="Zhu B."/>
            <person name="Rapp A."/>
            <person name="Widaa S."/>
            <person name="Langford C."/>
            <person name="Yang F."/>
            <person name="Schuster S.C."/>
            <person name="Carter N.P."/>
            <person name="Harrow J."/>
            <person name="Ning Z."/>
            <person name="Herrero J."/>
            <person name="Searle S.M."/>
            <person name="Enright A."/>
            <person name="Geisler R."/>
            <person name="Plasterk R.H."/>
            <person name="Lee C."/>
            <person name="Westerfield M."/>
            <person name="de Jong P.J."/>
            <person name="Zon L.I."/>
            <person name="Postlethwait J.H."/>
            <person name="Nusslein-Volhard C."/>
            <person name="Hubbard T.J."/>
            <person name="Roest Crollius H."/>
            <person name="Rogers J."/>
            <person name="Stemple D.L."/>
        </authorList>
    </citation>
    <scope>NUCLEOTIDE SEQUENCE [LARGE SCALE GENOMIC DNA]</scope>
    <source>
        <strain evidence="9">Tuebingen</strain>
    </source>
</reference>
<reference evidence="8" key="2">
    <citation type="journal article" date="2020" name="Sci. Adv.">
        <title>The NEMP family supports metazoan fertility and nuclear envelope stiffness.</title>
        <authorList>
            <person name="Tsatskis Y."/>
            <person name="Rosenfeld R."/>
            <person name="Pearson J.D."/>
            <person name="Boswell C."/>
            <person name="Qu Y."/>
            <person name="Kim K."/>
            <person name="Fabian L."/>
            <person name="Mohammad A."/>
            <person name="Wang X."/>
            <person name="Robson M.I."/>
            <person name="Krchma K."/>
            <person name="Wu J."/>
            <person name="Goncalves J."/>
            <person name="Hodzic D."/>
            <person name="Wu S."/>
            <person name="Potter D."/>
            <person name="Pelletier L."/>
            <person name="Dunham W.H."/>
            <person name="Gingras A.C."/>
            <person name="Sun Y."/>
            <person name="Meng J."/>
            <person name="Godt D."/>
            <person name="Schedl T."/>
            <person name="Ciruna B."/>
            <person name="Choi K."/>
            <person name="Perry J.R.B."/>
            <person name="Bremner R."/>
            <person name="Schirmer E.C."/>
            <person name="Brill J.A."/>
            <person name="Jurisicova A."/>
            <person name="McNeill H."/>
        </authorList>
    </citation>
    <scope>FUNCTION</scope>
    <scope>DISRUPTION PHENOTYPE</scope>
</reference>
<name>NEMP2_DANRE</name>
<protein>
    <recommendedName>
        <fullName evidence="10">Nuclear envelope integral membrane protein 2</fullName>
    </recommendedName>
</protein>
<keyword id="KW-0325">Glycoprotein</keyword>
<keyword id="KW-0472">Membrane</keyword>
<keyword id="KW-0539">Nucleus</keyword>
<keyword id="KW-1185">Reference proteome</keyword>
<keyword id="KW-0732">Signal</keyword>
<keyword id="KW-0812">Transmembrane</keyword>
<keyword id="KW-1133">Transmembrane helix</keyword>
<accession>F1QYC4</accession>
<evidence type="ECO:0000250" key="1">
    <source>
        <dbReference type="UniProtKB" id="B9X187"/>
    </source>
</evidence>
<evidence type="ECO:0000250" key="2">
    <source>
        <dbReference type="UniProtKB" id="O14524"/>
    </source>
</evidence>
<evidence type="ECO:0000250" key="3">
    <source>
        <dbReference type="UniProtKB" id="Q6ZQE4"/>
    </source>
</evidence>
<evidence type="ECO:0000255" key="4"/>
<evidence type="ECO:0000255" key="5">
    <source>
        <dbReference type="PROSITE-ProRule" id="PRU00498"/>
    </source>
</evidence>
<evidence type="ECO:0000256" key="6">
    <source>
        <dbReference type="SAM" id="MobiDB-lite"/>
    </source>
</evidence>
<evidence type="ECO:0000269" key="7">
    <source>
    </source>
</evidence>
<evidence type="ECO:0000305" key="8"/>
<evidence type="ECO:0000312" key="9">
    <source>
        <dbReference type="Proteomes" id="UP000000437"/>
    </source>
</evidence>
<evidence type="ECO:0000312" key="10">
    <source>
        <dbReference type="ZFIN" id="ZDB-GENE-081104-413"/>
    </source>
</evidence>
<proteinExistence type="inferred from homology"/>
<gene>
    <name evidence="10" type="primary">nemp2</name>
</gene>
<organism evidence="9">
    <name type="scientific">Danio rerio</name>
    <name type="common">Zebrafish</name>
    <name type="synonym">Brachydanio rerio</name>
    <dbReference type="NCBI Taxonomy" id="7955"/>
    <lineage>
        <taxon>Eukaryota</taxon>
        <taxon>Metazoa</taxon>
        <taxon>Chordata</taxon>
        <taxon>Craniata</taxon>
        <taxon>Vertebrata</taxon>
        <taxon>Euteleostomi</taxon>
        <taxon>Actinopterygii</taxon>
        <taxon>Neopterygii</taxon>
        <taxon>Teleostei</taxon>
        <taxon>Ostariophysi</taxon>
        <taxon>Cypriniformes</taxon>
        <taxon>Danionidae</taxon>
        <taxon>Danioninae</taxon>
        <taxon>Danio</taxon>
    </lineage>
</organism>